<proteinExistence type="inferred from homology"/>
<name>LPXK_KORVE</name>
<feature type="chain" id="PRO_0000340817" description="Tetraacyldisaccharide 4'-kinase">
    <location>
        <begin position="1"/>
        <end position="322"/>
    </location>
</feature>
<feature type="binding site" evidence="1">
    <location>
        <begin position="40"/>
        <end position="47"/>
    </location>
    <ligand>
        <name>ATP</name>
        <dbReference type="ChEBI" id="CHEBI:30616"/>
    </ligand>
</feature>
<gene>
    <name evidence="1" type="primary">lpxK</name>
    <name type="ordered locus">Acid345_4719</name>
</gene>
<keyword id="KW-0067">ATP-binding</keyword>
<keyword id="KW-0418">Kinase</keyword>
<keyword id="KW-0441">Lipid A biosynthesis</keyword>
<keyword id="KW-0444">Lipid biosynthesis</keyword>
<keyword id="KW-0443">Lipid metabolism</keyword>
<keyword id="KW-0547">Nucleotide-binding</keyword>
<keyword id="KW-1185">Reference proteome</keyword>
<keyword id="KW-0808">Transferase</keyword>
<dbReference type="EC" id="2.7.1.130" evidence="1"/>
<dbReference type="EMBL" id="CP000360">
    <property type="protein sequence ID" value="ABF43718.1"/>
    <property type="molecule type" value="Genomic_DNA"/>
</dbReference>
<dbReference type="RefSeq" id="WP_011525514.1">
    <property type="nucleotide sequence ID" value="NC_008009.1"/>
</dbReference>
<dbReference type="SMR" id="Q1IHD2"/>
<dbReference type="STRING" id="204669.Acid345_4719"/>
<dbReference type="EnsemblBacteria" id="ABF43718">
    <property type="protein sequence ID" value="ABF43718"/>
    <property type="gene ID" value="Acid345_4719"/>
</dbReference>
<dbReference type="KEGG" id="aba:Acid345_4719"/>
<dbReference type="eggNOG" id="COG1663">
    <property type="taxonomic scope" value="Bacteria"/>
</dbReference>
<dbReference type="HOGENOM" id="CLU_038816_6_0_0"/>
<dbReference type="OrthoDB" id="9789797at2"/>
<dbReference type="UniPathway" id="UPA00359">
    <property type="reaction ID" value="UER00482"/>
</dbReference>
<dbReference type="Proteomes" id="UP000002432">
    <property type="component" value="Chromosome"/>
</dbReference>
<dbReference type="GO" id="GO:0005886">
    <property type="term" value="C:plasma membrane"/>
    <property type="evidence" value="ECO:0007669"/>
    <property type="project" value="TreeGrafter"/>
</dbReference>
<dbReference type="GO" id="GO:0005524">
    <property type="term" value="F:ATP binding"/>
    <property type="evidence" value="ECO:0007669"/>
    <property type="project" value="UniProtKB-UniRule"/>
</dbReference>
<dbReference type="GO" id="GO:0009029">
    <property type="term" value="F:tetraacyldisaccharide 4'-kinase activity"/>
    <property type="evidence" value="ECO:0007669"/>
    <property type="project" value="UniProtKB-UniRule"/>
</dbReference>
<dbReference type="GO" id="GO:0009245">
    <property type="term" value="P:lipid A biosynthetic process"/>
    <property type="evidence" value="ECO:0007669"/>
    <property type="project" value="UniProtKB-UniRule"/>
</dbReference>
<dbReference type="GO" id="GO:0009244">
    <property type="term" value="P:lipopolysaccharide core region biosynthetic process"/>
    <property type="evidence" value="ECO:0007669"/>
    <property type="project" value="TreeGrafter"/>
</dbReference>
<dbReference type="HAMAP" id="MF_00409">
    <property type="entry name" value="LpxK"/>
    <property type="match status" value="1"/>
</dbReference>
<dbReference type="InterPro" id="IPR003758">
    <property type="entry name" value="LpxK"/>
</dbReference>
<dbReference type="InterPro" id="IPR027417">
    <property type="entry name" value="P-loop_NTPase"/>
</dbReference>
<dbReference type="NCBIfam" id="TIGR00682">
    <property type="entry name" value="lpxK"/>
    <property type="match status" value="1"/>
</dbReference>
<dbReference type="PANTHER" id="PTHR42724">
    <property type="entry name" value="TETRAACYLDISACCHARIDE 4'-KINASE"/>
    <property type="match status" value="1"/>
</dbReference>
<dbReference type="PANTHER" id="PTHR42724:SF1">
    <property type="entry name" value="TETRAACYLDISACCHARIDE 4'-KINASE, MITOCHONDRIAL-RELATED"/>
    <property type="match status" value="1"/>
</dbReference>
<dbReference type="Pfam" id="PF02606">
    <property type="entry name" value="LpxK"/>
    <property type="match status" value="1"/>
</dbReference>
<dbReference type="SUPFAM" id="SSF52540">
    <property type="entry name" value="P-loop containing nucleoside triphosphate hydrolases"/>
    <property type="match status" value="1"/>
</dbReference>
<sequence length="322" mass="36075">MNPLSALFGAGVATRNAMFDRSLLKQQRLRGPVVSVGNLCVGGTGKTPFTQLLGDLLMQREIDFDVLSRGYGRESTEIKIVELDGSPNEFGDEPLLLAKYFAAKKPENPPRVIVGADRYEAGRFAEQKFGPRLHLLDDGFQHRGLARDFDIVLLAPDDADQVLLPVGRLREPLTALKRAHAVVATDEVKIEAFPVMPPLVWRVERDIALPEQLSRNARVLAFCAIARPHRFFTDLRRHGLEPVAELTFRDHHRYSAADIEKIVREISSSRADCCVTTIKDMMNLGELVHRLAPIYAVRLSLKLRDADAALDEIIKIIERRQG</sequence>
<comment type="function">
    <text evidence="1">Transfers the gamma-phosphate of ATP to the 4'-position of a tetraacyldisaccharide 1-phosphate intermediate (termed DS-1-P) to form tetraacyldisaccharide 1,4'-bis-phosphate (lipid IVA).</text>
</comment>
<comment type="catalytic activity">
    <reaction evidence="1">
        <text>a lipid A disaccharide + ATP = a lipid IVA + ADP + H(+)</text>
        <dbReference type="Rhea" id="RHEA:67840"/>
        <dbReference type="ChEBI" id="CHEBI:15378"/>
        <dbReference type="ChEBI" id="CHEBI:30616"/>
        <dbReference type="ChEBI" id="CHEBI:176343"/>
        <dbReference type="ChEBI" id="CHEBI:176425"/>
        <dbReference type="ChEBI" id="CHEBI:456216"/>
        <dbReference type="EC" id="2.7.1.130"/>
    </reaction>
</comment>
<comment type="pathway">
    <text evidence="1">Glycolipid biosynthesis; lipid IV(A) biosynthesis; lipid IV(A) from (3R)-3-hydroxytetradecanoyl-[acyl-carrier-protein] and UDP-N-acetyl-alpha-D-glucosamine: step 6/6.</text>
</comment>
<comment type="similarity">
    <text evidence="1">Belongs to the LpxK family.</text>
</comment>
<accession>Q1IHD2</accession>
<reference key="1">
    <citation type="journal article" date="2009" name="Appl. Environ. Microbiol.">
        <title>Three genomes from the phylum Acidobacteria provide insight into the lifestyles of these microorganisms in soils.</title>
        <authorList>
            <person name="Ward N.L."/>
            <person name="Challacombe J.F."/>
            <person name="Janssen P.H."/>
            <person name="Henrissat B."/>
            <person name="Coutinho P.M."/>
            <person name="Wu M."/>
            <person name="Xie G."/>
            <person name="Haft D.H."/>
            <person name="Sait M."/>
            <person name="Badger J."/>
            <person name="Barabote R.D."/>
            <person name="Bradley B."/>
            <person name="Brettin T.S."/>
            <person name="Brinkac L.M."/>
            <person name="Bruce D."/>
            <person name="Creasy T."/>
            <person name="Daugherty S.C."/>
            <person name="Davidsen T.M."/>
            <person name="DeBoy R.T."/>
            <person name="Detter J.C."/>
            <person name="Dodson R.J."/>
            <person name="Durkin A.S."/>
            <person name="Ganapathy A."/>
            <person name="Gwinn-Giglio M."/>
            <person name="Han C.S."/>
            <person name="Khouri H."/>
            <person name="Kiss H."/>
            <person name="Kothari S.P."/>
            <person name="Madupu R."/>
            <person name="Nelson K.E."/>
            <person name="Nelson W.C."/>
            <person name="Paulsen I."/>
            <person name="Penn K."/>
            <person name="Ren Q."/>
            <person name="Rosovitz M.J."/>
            <person name="Selengut J.D."/>
            <person name="Shrivastava S."/>
            <person name="Sullivan S.A."/>
            <person name="Tapia R."/>
            <person name="Thompson L.S."/>
            <person name="Watkins K.L."/>
            <person name="Yang Q."/>
            <person name="Yu C."/>
            <person name="Zafar N."/>
            <person name="Zhou L."/>
            <person name="Kuske C.R."/>
        </authorList>
    </citation>
    <scope>NUCLEOTIDE SEQUENCE [LARGE SCALE GENOMIC DNA]</scope>
    <source>
        <strain>Ellin345</strain>
    </source>
</reference>
<protein>
    <recommendedName>
        <fullName evidence="1">Tetraacyldisaccharide 4'-kinase</fullName>
        <ecNumber evidence="1">2.7.1.130</ecNumber>
    </recommendedName>
    <alternativeName>
        <fullName evidence="1">Lipid A 4'-kinase</fullName>
    </alternativeName>
</protein>
<evidence type="ECO:0000255" key="1">
    <source>
        <dbReference type="HAMAP-Rule" id="MF_00409"/>
    </source>
</evidence>
<organism>
    <name type="scientific">Koribacter versatilis (strain Ellin345)</name>
    <dbReference type="NCBI Taxonomy" id="204669"/>
    <lineage>
        <taxon>Bacteria</taxon>
        <taxon>Pseudomonadati</taxon>
        <taxon>Acidobacteriota</taxon>
        <taxon>Terriglobia</taxon>
        <taxon>Terriglobales</taxon>
        <taxon>Candidatus Korobacteraceae</taxon>
        <taxon>Candidatus Korobacter</taxon>
    </lineage>
</organism>